<gene>
    <name type="primary">LF1</name>
</gene>
<name>LF1_EBVB9</name>
<organismHost>
    <name type="scientific">Homo sapiens</name>
    <name type="common">Human</name>
    <dbReference type="NCBI Taxonomy" id="9606"/>
</organismHost>
<accession>Q8AZJ5</accession>
<evidence type="ECO:0000256" key="1">
    <source>
        <dbReference type="SAM" id="MobiDB-lite"/>
    </source>
</evidence>
<evidence type="ECO:0000305" key="2"/>
<organism>
    <name type="scientific">Epstein-Barr virus (strain B95-8)</name>
    <name type="common">HHV-4</name>
    <name type="synonym">Human herpesvirus 4</name>
    <dbReference type="NCBI Taxonomy" id="10377"/>
    <lineage>
        <taxon>Viruses</taxon>
        <taxon>Duplodnaviria</taxon>
        <taxon>Heunggongvirae</taxon>
        <taxon>Peploviricota</taxon>
        <taxon>Herviviricetes</taxon>
        <taxon>Herpesvirales</taxon>
        <taxon>Orthoherpesviridae</taxon>
        <taxon>Gammaherpesvirinae</taxon>
        <taxon>Lymphocryptovirus</taxon>
        <taxon>Lymphocryptovirus humangamma4</taxon>
        <taxon>Epstein-Barr virus (strain GD1)</taxon>
    </lineage>
</organism>
<sequence>MALQTDTQAWRVEIGTRGLMFSNCVPLHLPEGQYHKLRLPVSAYEALAVARYGLVGSLWEVPAVNSALQCLAAAAPCKDVKIYPSCIFQVHAPMFVTIKTSLRCLNPHDLCLCLICVGAAILDIPLLCAPRDGAGARAAEGQAAAAQGGKLRVWGRLSPSSPTSLSLAFPYAGPPPVAWYRHSINLTRSEGVGIGKDCAQDHACPVPPQGHASSAADQAGVPERGRKRAHEGPGAGEAASAGRGDVALSQSRALLWRGLGWDTGRGRLAPGLAMSRDAASGSVHLDIQVDRAEEGWVCDVLLEPGPPTAREGCSLSMDPGLVTLKDAWTLFPLHPEHDAVVPPKEEIHVMAQGHLQGGTPSLWGFTFQEAACDQWVLRPRVWTAHSPIKMTVYNCGHKPLHIGPSTRLGLALFWPAERSDNLDAGRIFYQLTSGELYWGRTVARPPTLTLPVDELRPWPKLTPEEPMQH</sequence>
<feature type="chain" id="PRO_0000382447" description="Uncharacterized LF1 protein">
    <location>
        <begin position="1"/>
        <end position="469"/>
    </location>
</feature>
<feature type="region of interest" description="Disordered" evidence="1">
    <location>
        <begin position="203"/>
        <end position="244"/>
    </location>
</feature>
<keyword id="KW-1185">Reference proteome</keyword>
<dbReference type="EMBL" id="AJ507799">
    <property type="protein sequence ID" value="CAD53459.1"/>
    <property type="molecule type" value="Genomic_DNA"/>
</dbReference>
<dbReference type="RefSeq" id="YP_401709.1">
    <property type="nucleotide sequence ID" value="NC_007605.1"/>
</dbReference>
<dbReference type="BioGRID" id="971789">
    <property type="interactions" value="1"/>
</dbReference>
<dbReference type="DNASU" id="3783747"/>
<dbReference type="GeneID" id="3783747"/>
<dbReference type="KEGG" id="vg:3783747"/>
<dbReference type="Proteomes" id="UP000153037">
    <property type="component" value="Segment"/>
</dbReference>
<dbReference type="InterPro" id="IPR006882">
    <property type="entry name" value="Herpes_Orf11"/>
</dbReference>
<dbReference type="Pfam" id="PF04797">
    <property type="entry name" value="Herpes_ORF11"/>
    <property type="match status" value="1"/>
</dbReference>
<reference key="1">
    <citation type="journal article" date="1984" name="Nature">
        <title>DNA sequence and expression of the B95-8 Epstein-Barr virus genome.</title>
        <authorList>
            <person name="Baer R."/>
            <person name="Bankier A.T."/>
            <person name="Biggin M.D."/>
            <person name="Deininger P.L."/>
            <person name="Farrell P.J."/>
            <person name="Gibson T.J."/>
            <person name="Hatfull G."/>
            <person name="Hudson G.S."/>
            <person name="Satchwell S.C."/>
            <person name="Seguin C."/>
            <person name="Tuffnell P.S."/>
            <person name="Barrell B.G."/>
        </authorList>
    </citation>
    <scope>NUCLEOTIDE SEQUENCE [LARGE SCALE GENOMIC DNA]</scope>
    <source>
        <strain>Raji</strain>
    </source>
</reference>
<reference key="2">
    <citation type="journal article" date="2003" name="Virology">
        <title>Updated Epstein-Barr virus (EBV) DNA sequence and analysis of a promoter for the BART (CST, BARF0) RNAs of EBV.</title>
        <authorList>
            <person name="de Jesus O."/>
            <person name="Smith P.R."/>
            <person name="Spender L.C."/>
            <person name="Elgueta Karstegl C."/>
            <person name="Niller H.H."/>
            <person name="Huang D."/>
            <person name="Farrell P.J."/>
        </authorList>
    </citation>
    <scope>GENOME REANNOTATION</scope>
    <source>
        <strain>B95-8/Raji</strain>
    </source>
</reference>
<proteinExistence type="inferred from homology"/>
<protein>
    <recommendedName>
        <fullName>Uncharacterized LF1 protein</fullName>
    </recommendedName>
</protein>
<comment type="similarity">
    <text evidence="2">Belongs to the epstein-barr virus LF1 family.</text>
</comment>
<comment type="caution">
    <text evidence="2">PubMed:12771413 displays a sequence of strain B95-8, which contains a deletion restored by the DNA of strain Raji in order to get a more representative sequence of wild type EBV. This protein is encoded by the DNA of Raji strain.</text>
</comment>